<evidence type="ECO:0000250" key="1"/>
<evidence type="ECO:0000250" key="2">
    <source>
        <dbReference type="UniProtKB" id="P29022"/>
    </source>
</evidence>
<evidence type="ECO:0000255" key="3">
    <source>
        <dbReference type="PROSITE-ProRule" id="PRU00261"/>
    </source>
</evidence>
<evidence type="ECO:0000269" key="4">
    <source ref="2"/>
</evidence>
<evidence type="ECO:0000305" key="5"/>
<accession>P06215</accession>
<dbReference type="EC" id="3.2.1.14"/>
<dbReference type="EMBL" id="M13968">
    <property type="protein sequence ID" value="AAA33756.1"/>
    <property type="molecule type" value="mRNA"/>
</dbReference>
<dbReference type="EMBL" id="M19052">
    <property type="protein sequence ID" value="AAA33757.1"/>
    <property type="molecule type" value="mRNA"/>
</dbReference>
<dbReference type="SMR" id="P06215"/>
<dbReference type="CAZy" id="CBM18">
    <property type="family name" value="Carbohydrate-Binding Module Family 18"/>
</dbReference>
<dbReference type="CAZy" id="GH19">
    <property type="family name" value="Glycoside Hydrolase Family 19"/>
</dbReference>
<dbReference type="ProMEX" id="P06215"/>
<dbReference type="GO" id="GO:0005773">
    <property type="term" value="C:vacuole"/>
    <property type="evidence" value="ECO:0007669"/>
    <property type="project" value="UniProtKB-SubCell"/>
</dbReference>
<dbReference type="GO" id="GO:0008061">
    <property type="term" value="F:chitin binding"/>
    <property type="evidence" value="ECO:0007669"/>
    <property type="project" value="UniProtKB-KW"/>
</dbReference>
<dbReference type="GO" id="GO:0008843">
    <property type="term" value="F:endochitinase activity"/>
    <property type="evidence" value="ECO:0007669"/>
    <property type="project" value="UniProtKB-EC"/>
</dbReference>
<dbReference type="GO" id="GO:0016998">
    <property type="term" value="P:cell wall macromolecule catabolic process"/>
    <property type="evidence" value="ECO:0007669"/>
    <property type="project" value="InterPro"/>
</dbReference>
<dbReference type="GO" id="GO:0006032">
    <property type="term" value="P:chitin catabolic process"/>
    <property type="evidence" value="ECO:0007669"/>
    <property type="project" value="UniProtKB-KW"/>
</dbReference>
<dbReference type="GO" id="GO:0050832">
    <property type="term" value="P:defense response to fungus"/>
    <property type="evidence" value="ECO:0007669"/>
    <property type="project" value="TreeGrafter"/>
</dbReference>
<dbReference type="GO" id="GO:0000272">
    <property type="term" value="P:polysaccharide catabolic process"/>
    <property type="evidence" value="ECO:0007669"/>
    <property type="project" value="UniProtKB-KW"/>
</dbReference>
<dbReference type="CDD" id="cd00325">
    <property type="entry name" value="chitinase_GH19"/>
    <property type="match status" value="1"/>
</dbReference>
<dbReference type="CDD" id="cd06921">
    <property type="entry name" value="ChtBD1_GH19_hevein"/>
    <property type="match status" value="1"/>
</dbReference>
<dbReference type="FunFam" id="3.30.60.10:FF:000001">
    <property type="entry name" value="Basic endochitinase"/>
    <property type="match status" value="1"/>
</dbReference>
<dbReference type="FunFam" id="3.30.20.10:FF:000001">
    <property type="entry name" value="Endochitinase (Chitinase)"/>
    <property type="match status" value="1"/>
</dbReference>
<dbReference type="Gene3D" id="1.10.530.10">
    <property type="match status" value="1"/>
</dbReference>
<dbReference type="Gene3D" id="3.30.20.10">
    <property type="entry name" value="Endochitinase, domain 2"/>
    <property type="match status" value="1"/>
</dbReference>
<dbReference type="Gene3D" id="3.30.60.10">
    <property type="entry name" value="Endochitinase-like"/>
    <property type="match status" value="1"/>
</dbReference>
<dbReference type="InterPro" id="IPR001002">
    <property type="entry name" value="Chitin-bd_1"/>
</dbReference>
<dbReference type="InterPro" id="IPR018371">
    <property type="entry name" value="Chitin-binding_1_CS"/>
</dbReference>
<dbReference type="InterPro" id="IPR036861">
    <property type="entry name" value="Endochitinase-like_sf"/>
</dbReference>
<dbReference type="InterPro" id="IPR016283">
    <property type="entry name" value="Glyco_hydro_19"/>
</dbReference>
<dbReference type="InterPro" id="IPR000726">
    <property type="entry name" value="Glyco_hydro_19_cat"/>
</dbReference>
<dbReference type="InterPro" id="IPR023346">
    <property type="entry name" value="Lysozyme-like_dom_sf"/>
</dbReference>
<dbReference type="PANTHER" id="PTHR22595:SF79">
    <property type="entry name" value="CHITINASE 12"/>
    <property type="match status" value="1"/>
</dbReference>
<dbReference type="PANTHER" id="PTHR22595">
    <property type="entry name" value="CHITINASE-RELATED"/>
    <property type="match status" value="1"/>
</dbReference>
<dbReference type="Pfam" id="PF00187">
    <property type="entry name" value="Chitin_bind_1"/>
    <property type="match status" value="1"/>
</dbReference>
<dbReference type="Pfam" id="PF00182">
    <property type="entry name" value="Glyco_hydro_19"/>
    <property type="match status" value="1"/>
</dbReference>
<dbReference type="PIRSF" id="PIRSF001060">
    <property type="entry name" value="Endochitinase"/>
    <property type="match status" value="1"/>
</dbReference>
<dbReference type="PRINTS" id="PR00451">
    <property type="entry name" value="CHITINBINDNG"/>
</dbReference>
<dbReference type="SMART" id="SM00270">
    <property type="entry name" value="ChtBD1"/>
    <property type="match status" value="1"/>
</dbReference>
<dbReference type="SUPFAM" id="SSF53955">
    <property type="entry name" value="Lysozyme-like"/>
    <property type="match status" value="1"/>
</dbReference>
<dbReference type="SUPFAM" id="SSF57016">
    <property type="entry name" value="Plant lectins/antimicrobial peptides"/>
    <property type="match status" value="1"/>
</dbReference>
<dbReference type="PROSITE" id="PS00026">
    <property type="entry name" value="CHIT_BIND_I_1"/>
    <property type="match status" value="1"/>
</dbReference>
<dbReference type="PROSITE" id="PS50941">
    <property type="entry name" value="CHIT_BIND_I_2"/>
    <property type="match status" value="1"/>
</dbReference>
<dbReference type="PROSITE" id="PS00773">
    <property type="entry name" value="CHITINASE_19_1"/>
    <property type="match status" value="1"/>
</dbReference>
<dbReference type="PROSITE" id="PS00774">
    <property type="entry name" value="CHITINASE_19_2"/>
    <property type="match status" value="1"/>
</dbReference>
<organism>
    <name type="scientific">Phaseolus vulgaris</name>
    <name type="common">Kidney bean</name>
    <name type="synonym">French bean</name>
    <dbReference type="NCBI Taxonomy" id="3885"/>
    <lineage>
        <taxon>Eukaryota</taxon>
        <taxon>Viridiplantae</taxon>
        <taxon>Streptophyta</taxon>
        <taxon>Embryophyta</taxon>
        <taxon>Tracheophyta</taxon>
        <taxon>Spermatophyta</taxon>
        <taxon>Magnoliopsida</taxon>
        <taxon>eudicotyledons</taxon>
        <taxon>Gunneridae</taxon>
        <taxon>Pentapetalae</taxon>
        <taxon>rosids</taxon>
        <taxon>fabids</taxon>
        <taxon>Fabales</taxon>
        <taxon>Fabaceae</taxon>
        <taxon>Papilionoideae</taxon>
        <taxon>50 kb inversion clade</taxon>
        <taxon>NPAAA clade</taxon>
        <taxon>indigoferoid/millettioid clade</taxon>
        <taxon>Phaseoleae</taxon>
        <taxon>Phaseolus</taxon>
    </lineage>
</organism>
<keyword id="KW-0119">Carbohydrate metabolism</keyword>
<keyword id="KW-0146">Chitin degradation</keyword>
<keyword id="KW-0147">Chitin-binding</keyword>
<keyword id="KW-0903">Direct protein sequencing</keyword>
<keyword id="KW-1015">Disulfide bond</keyword>
<keyword id="KW-0326">Glycosidase</keyword>
<keyword id="KW-0378">Hydrolase</keyword>
<keyword id="KW-0611">Plant defense</keyword>
<keyword id="KW-0624">Polysaccharide degradation</keyword>
<keyword id="KW-0732">Signal</keyword>
<keyword id="KW-0926">Vacuole</keyword>
<comment type="function">
    <text>Defense against chitin-containing fungal pathogens.</text>
</comment>
<comment type="catalytic activity">
    <reaction>
        <text>Random endo-hydrolysis of N-acetyl-beta-D-glucosaminide (1-&gt;4)-beta-linkages in chitin and chitodextrins.</text>
        <dbReference type="EC" id="3.2.1.14"/>
    </reaction>
</comment>
<comment type="subcellular location">
    <subcellularLocation>
        <location evidence="1">Vacuole</location>
    </subcellularLocation>
    <text evidence="1">Vacuolar and protoplast.</text>
</comment>
<comment type="induction">
    <text>By ethylene.</text>
</comment>
<comment type="similarity">
    <text evidence="5">Belongs to the glycosyl hydrolase 19 family. Chitinase class I subfamily.</text>
</comment>
<sequence>MKKNRMMMMIWSVGVVWMLLLVGGSYGEQCGRQAGGALCPGGNCCSQFGWCGSTTDYCGPGCQSQCGGPSPAPTDLSALISRSTFDQMLKHRNDGACPAKGFYTYDAFIAAAKAYPSFGNTGDTATRKREIAAFLGQTSHETTGGWATAPDGPYAWGYCFVRERNPSTYCSATPQFPCAPGQQYYGRGPIQISWNYNYGQCGRAIGVDLLNKPDLVATDSVISFKSALWFWMTAQSPKPSSHDVITSRWTPSSADVAARRLPGYGTVTNIINGGLECGRGQDSRVQDRIGFFKRYCDLLGVGYGNNLDCYSQTPFGNSLLLSDLVTSQ</sequence>
<protein>
    <recommendedName>
        <fullName>Endochitinase</fullName>
        <ecNumber>3.2.1.14</ecNumber>
    </recommendedName>
</protein>
<proteinExistence type="evidence at protein level"/>
<reference key="1">
    <citation type="journal article" date="1986" name="Proc. Natl. Acad. Sci. U.S.A.">
        <title>Ethylene-regulated gene expression: molecular cloning of the genes encoding an endochitinase from Phaseolus vulgaris.</title>
        <authorList>
            <person name="Broglie K.E."/>
            <person name="Gaynor J.J."/>
            <person name="Broglie R.M."/>
        </authorList>
    </citation>
    <scope>NUCLEOTIDE SEQUENCE [MRNA]</scope>
    <source>
        <strain>cv. Saxa</strain>
    </source>
</reference>
<reference key="2">
    <citation type="journal article" date="1985" name="FEBS Lett.">
        <title>Amino-terminal sequence of ethylene-induced bean leaf chitinase reveals similarities to sugar-binding domains of wheat germ agglutinin.</title>
        <authorList>
            <person name="Lucas J."/>
            <person name="Henschen A."/>
            <person name="Lottspeich F."/>
            <person name="Voegeli U."/>
            <person name="Boller T."/>
        </authorList>
    </citation>
    <scope>PROTEIN SEQUENCE OF 28-57</scope>
</reference>
<reference key="3">
    <citation type="journal article" date="1988" name="Plant Physiol.">
        <title>Chitinase cDNA cloning and mRNA induction by fungal elicitor, wounding, and infection.</title>
        <authorList>
            <person name="Hedrick S.A."/>
            <person name="Bell J.N."/>
            <person name="Boller T."/>
            <person name="Lamb C.J."/>
        </authorList>
    </citation>
    <scope>NUCLEOTIDE SEQUENCE [MRNA] OF 28-51</scope>
</reference>
<feature type="signal peptide" evidence="4">
    <location>
        <begin position="1"/>
        <end position="27"/>
    </location>
</feature>
<feature type="chain" id="PRO_0000005311" description="Endochitinase">
    <location>
        <begin position="28"/>
        <end position="317"/>
    </location>
</feature>
<feature type="propeptide" id="PRO_0000005312" description="Removed in mature form" evidence="5">
    <location>
        <begin position="318"/>
        <end position="328"/>
    </location>
</feature>
<feature type="domain" description="Chitin-binding type-1" evidence="3">
    <location>
        <begin position="28"/>
        <end position="68"/>
    </location>
</feature>
<feature type="active site" description="Proton donor" evidence="2">
    <location>
        <position position="141"/>
    </location>
</feature>
<feature type="disulfide bond" evidence="3">
    <location>
        <begin position="30"/>
        <end position="45"/>
    </location>
</feature>
<feature type="disulfide bond" evidence="3">
    <location>
        <begin position="39"/>
        <end position="51"/>
    </location>
</feature>
<feature type="disulfide bond" evidence="3">
    <location>
        <begin position="44"/>
        <end position="58"/>
    </location>
</feature>
<feature type="disulfide bond" evidence="3">
    <location>
        <begin position="62"/>
        <end position="66"/>
    </location>
</feature>
<feature type="disulfide bond" evidence="3">
    <location>
        <begin position="97"/>
        <end position="159"/>
    </location>
</feature>
<feature type="disulfide bond" evidence="3">
    <location>
        <begin position="170"/>
        <end position="178"/>
    </location>
</feature>
<feature type="disulfide bond" evidence="3">
    <location>
        <begin position="277"/>
        <end position="309"/>
    </location>
</feature>
<feature type="sequence variant">
    <original>M</original>
    <variation>V</variation>
    <location>
        <position position="88"/>
    </location>
</feature>
<feature type="sequence variant">
    <original>T</original>
    <variation>A</variation>
    <location>
        <position position="168"/>
    </location>
</feature>
<feature type="sequence variant">
    <original>L</original>
    <variation>F</variation>
    <location>
        <position position="210"/>
    </location>
</feature>
<feature type="sequence conflict" description="In Ref. 3; AAA33757." evidence="5" ref="3">
    <original>P</original>
    <variation>L</variation>
    <location>
        <position position="40"/>
    </location>
</feature>
<feature type="sequence conflict" description="In Ref. 2; AA sequence." evidence="5" ref="2">
    <original>T</original>
    <variation>S</variation>
    <location>
        <position position="54"/>
    </location>
</feature>
<feature type="sequence conflict" description="In Ref. 2; AA sequence." evidence="5" ref="2">
    <original>D</original>
    <variation>E</variation>
    <location>
        <position position="56"/>
    </location>
</feature>
<name>CHIT_PHAVU</name>